<organism>
    <name type="scientific">Bacillus subtilis (strain 168)</name>
    <dbReference type="NCBI Taxonomy" id="224308"/>
    <lineage>
        <taxon>Bacteria</taxon>
        <taxon>Bacillati</taxon>
        <taxon>Bacillota</taxon>
        <taxon>Bacilli</taxon>
        <taxon>Bacillales</taxon>
        <taxon>Bacillaceae</taxon>
        <taxon>Bacillus</taxon>
    </lineage>
</organism>
<evidence type="ECO:0000255" key="1">
    <source>
        <dbReference type="PROSITE-ProRule" id="PRU00257"/>
    </source>
</evidence>
<feature type="chain" id="PRO_0000383638" description="SPbeta prophage-derived uncharacterized HTH-type transcriptional regulator YopS">
    <location>
        <begin position="1"/>
        <end position="74"/>
    </location>
</feature>
<feature type="domain" description="HTH cro/C1-type" evidence="1">
    <location>
        <begin position="11"/>
        <end position="66"/>
    </location>
</feature>
<feature type="DNA-binding region" description="H-T-H motif" evidence="1">
    <location>
        <begin position="22"/>
        <end position="41"/>
    </location>
</feature>
<reference key="1">
    <citation type="journal article" date="1997" name="Nature">
        <title>The complete genome sequence of the Gram-positive bacterium Bacillus subtilis.</title>
        <authorList>
            <person name="Kunst F."/>
            <person name="Ogasawara N."/>
            <person name="Moszer I."/>
            <person name="Albertini A.M."/>
            <person name="Alloni G."/>
            <person name="Azevedo V."/>
            <person name="Bertero M.G."/>
            <person name="Bessieres P."/>
            <person name="Bolotin A."/>
            <person name="Borchert S."/>
            <person name="Borriss R."/>
            <person name="Boursier L."/>
            <person name="Brans A."/>
            <person name="Braun M."/>
            <person name="Brignell S.C."/>
            <person name="Bron S."/>
            <person name="Brouillet S."/>
            <person name="Bruschi C.V."/>
            <person name="Caldwell B."/>
            <person name="Capuano V."/>
            <person name="Carter N.M."/>
            <person name="Choi S.-K."/>
            <person name="Codani J.-J."/>
            <person name="Connerton I.F."/>
            <person name="Cummings N.J."/>
            <person name="Daniel R.A."/>
            <person name="Denizot F."/>
            <person name="Devine K.M."/>
            <person name="Duesterhoeft A."/>
            <person name="Ehrlich S.D."/>
            <person name="Emmerson P.T."/>
            <person name="Entian K.-D."/>
            <person name="Errington J."/>
            <person name="Fabret C."/>
            <person name="Ferrari E."/>
            <person name="Foulger D."/>
            <person name="Fritz C."/>
            <person name="Fujita M."/>
            <person name="Fujita Y."/>
            <person name="Fuma S."/>
            <person name="Galizzi A."/>
            <person name="Galleron N."/>
            <person name="Ghim S.-Y."/>
            <person name="Glaser P."/>
            <person name="Goffeau A."/>
            <person name="Golightly E.J."/>
            <person name="Grandi G."/>
            <person name="Guiseppi G."/>
            <person name="Guy B.J."/>
            <person name="Haga K."/>
            <person name="Haiech J."/>
            <person name="Harwood C.R."/>
            <person name="Henaut A."/>
            <person name="Hilbert H."/>
            <person name="Holsappel S."/>
            <person name="Hosono S."/>
            <person name="Hullo M.-F."/>
            <person name="Itaya M."/>
            <person name="Jones L.-M."/>
            <person name="Joris B."/>
            <person name="Karamata D."/>
            <person name="Kasahara Y."/>
            <person name="Klaerr-Blanchard M."/>
            <person name="Klein C."/>
            <person name="Kobayashi Y."/>
            <person name="Koetter P."/>
            <person name="Koningstein G."/>
            <person name="Krogh S."/>
            <person name="Kumano M."/>
            <person name="Kurita K."/>
            <person name="Lapidus A."/>
            <person name="Lardinois S."/>
            <person name="Lauber J."/>
            <person name="Lazarevic V."/>
            <person name="Lee S.-M."/>
            <person name="Levine A."/>
            <person name="Liu H."/>
            <person name="Masuda S."/>
            <person name="Mauel C."/>
            <person name="Medigue C."/>
            <person name="Medina N."/>
            <person name="Mellado R.P."/>
            <person name="Mizuno M."/>
            <person name="Moestl D."/>
            <person name="Nakai S."/>
            <person name="Noback M."/>
            <person name="Noone D."/>
            <person name="O'Reilly M."/>
            <person name="Ogawa K."/>
            <person name="Ogiwara A."/>
            <person name="Oudega B."/>
            <person name="Park S.-H."/>
            <person name="Parro V."/>
            <person name="Pohl T.M."/>
            <person name="Portetelle D."/>
            <person name="Porwollik S."/>
            <person name="Prescott A.M."/>
            <person name="Presecan E."/>
            <person name="Pujic P."/>
            <person name="Purnelle B."/>
            <person name="Rapoport G."/>
            <person name="Rey M."/>
            <person name="Reynolds S."/>
            <person name="Rieger M."/>
            <person name="Rivolta C."/>
            <person name="Rocha E."/>
            <person name="Roche B."/>
            <person name="Rose M."/>
            <person name="Sadaie Y."/>
            <person name="Sato T."/>
            <person name="Scanlan E."/>
            <person name="Schleich S."/>
            <person name="Schroeter R."/>
            <person name="Scoffone F."/>
            <person name="Sekiguchi J."/>
            <person name="Sekowska A."/>
            <person name="Seror S.J."/>
            <person name="Serror P."/>
            <person name="Shin B.-S."/>
            <person name="Soldo B."/>
            <person name="Sorokin A."/>
            <person name="Tacconi E."/>
            <person name="Takagi T."/>
            <person name="Takahashi H."/>
            <person name="Takemaru K."/>
            <person name="Takeuchi M."/>
            <person name="Tamakoshi A."/>
            <person name="Tanaka T."/>
            <person name="Terpstra P."/>
            <person name="Tognoni A."/>
            <person name="Tosato V."/>
            <person name="Uchiyama S."/>
            <person name="Vandenbol M."/>
            <person name="Vannier F."/>
            <person name="Vassarotti A."/>
            <person name="Viari A."/>
            <person name="Wambutt R."/>
            <person name="Wedler E."/>
            <person name="Wedler H."/>
            <person name="Weitzenegger T."/>
            <person name="Winters P."/>
            <person name="Wipat A."/>
            <person name="Yamamoto H."/>
            <person name="Yamane K."/>
            <person name="Yasumoto K."/>
            <person name="Yata K."/>
            <person name="Yoshida K."/>
            <person name="Yoshikawa H.-F."/>
            <person name="Zumstein E."/>
            <person name="Yoshikawa H."/>
            <person name="Danchin A."/>
        </authorList>
    </citation>
    <scope>NUCLEOTIDE SEQUENCE [LARGE SCALE GENOMIC DNA]</scope>
    <source>
        <strain>168</strain>
    </source>
</reference>
<sequence>MIKVEIGQCLIPELCRKKDITINELSEITGIKKQQLSDYNRLVKVDMSIRTAKRIAAALDCNVEDLYEFKVERH</sequence>
<dbReference type="EMBL" id="AL009126">
    <property type="protein sequence ID" value="CAB13970.1"/>
    <property type="molecule type" value="Genomic_DNA"/>
</dbReference>
<dbReference type="RefSeq" id="NP_389960.1">
    <property type="nucleotide sequence ID" value="NC_000964.3"/>
</dbReference>
<dbReference type="RefSeq" id="WP_004399410.1">
    <property type="nucleotide sequence ID" value="NZ_OZ025638.1"/>
</dbReference>
<dbReference type="SMR" id="O34766"/>
<dbReference type="FunCoup" id="O34766">
    <property type="interactions" value="8"/>
</dbReference>
<dbReference type="STRING" id="224308.BSU20780"/>
<dbReference type="PaxDb" id="224308-BSU20780"/>
<dbReference type="EnsemblBacteria" id="CAB13970">
    <property type="protein sequence ID" value="CAB13970"/>
    <property type="gene ID" value="BSU_20780"/>
</dbReference>
<dbReference type="GeneID" id="939428"/>
<dbReference type="KEGG" id="bsu:BSU20780"/>
<dbReference type="PATRIC" id="fig|224308.179.peg.2268"/>
<dbReference type="eggNOG" id="COG3655">
    <property type="taxonomic scope" value="Bacteria"/>
</dbReference>
<dbReference type="InParanoid" id="O34766"/>
<dbReference type="OrthoDB" id="2472497at2"/>
<dbReference type="BioCyc" id="BSUB:BSU20780-MONOMER"/>
<dbReference type="Proteomes" id="UP000001570">
    <property type="component" value="Chromosome"/>
</dbReference>
<dbReference type="GO" id="GO:0003677">
    <property type="term" value="F:DNA binding"/>
    <property type="evidence" value="ECO:0007669"/>
    <property type="project" value="UniProtKB-KW"/>
</dbReference>
<dbReference type="Gene3D" id="1.10.260.40">
    <property type="entry name" value="lambda repressor-like DNA-binding domains"/>
    <property type="match status" value="1"/>
</dbReference>
<dbReference type="InterPro" id="IPR001387">
    <property type="entry name" value="Cro/C1-type_HTH"/>
</dbReference>
<dbReference type="InterPro" id="IPR010982">
    <property type="entry name" value="Lambda_DNA-bd_dom_sf"/>
</dbReference>
<dbReference type="Pfam" id="PF13443">
    <property type="entry name" value="HTH_26"/>
    <property type="match status" value="1"/>
</dbReference>
<dbReference type="SMART" id="SM00530">
    <property type="entry name" value="HTH_XRE"/>
    <property type="match status" value="1"/>
</dbReference>
<dbReference type="SUPFAM" id="SSF47413">
    <property type="entry name" value="lambda repressor-like DNA-binding domains"/>
    <property type="match status" value="1"/>
</dbReference>
<dbReference type="PROSITE" id="PS50943">
    <property type="entry name" value="HTH_CROC1"/>
    <property type="match status" value="1"/>
</dbReference>
<name>YOPS_BACSU</name>
<keyword id="KW-0238">DNA-binding</keyword>
<keyword id="KW-1185">Reference proteome</keyword>
<keyword id="KW-0804">Transcription</keyword>
<keyword id="KW-0805">Transcription regulation</keyword>
<proteinExistence type="predicted"/>
<accession>O34766</accession>
<protein>
    <recommendedName>
        <fullName>SPbeta prophage-derived uncharacterized HTH-type transcriptional regulator YopS</fullName>
    </recommendedName>
</protein>
<gene>
    <name type="primary">yopS</name>
    <name type="ordered locus">BSU20780</name>
</gene>